<organism>
    <name type="scientific">Shewanella amazonensis (strain ATCC BAA-1098 / SB2B)</name>
    <dbReference type="NCBI Taxonomy" id="326297"/>
    <lineage>
        <taxon>Bacteria</taxon>
        <taxon>Pseudomonadati</taxon>
        <taxon>Pseudomonadota</taxon>
        <taxon>Gammaproteobacteria</taxon>
        <taxon>Alteromonadales</taxon>
        <taxon>Shewanellaceae</taxon>
        <taxon>Shewanella</taxon>
    </lineage>
</organism>
<gene>
    <name evidence="1" type="primary">rnhA</name>
    <name type="ordered locus">Sama_1881</name>
</gene>
<comment type="function">
    <text evidence="1">Endonuclease that specifically degrades the RNA of RNA-DNA hybrids.</text>
</comment>
<comment type="catalytic activity">
    <reaction evidence="1">
        <text>Endonucleolytic cleavage to 5'-phosphomonoester.</text>
        <dbReference type="EC" id="3.1.26.4"/>
    </reaction>
</comment>
<comment type="cofactor">
    <cofactor evidence="1">
        <name>Mg(2+)</name>
        <dbReference type="ChEBI" id="CHEBI:18420"/>
    </cofactor>
    <text evidence="1">Binds 1 Mg(2+) ion per subunit. May bind a second metal ion at a regulatory site, or after substrate binding.</text>
</comment>
<comment type="subunit">
    <text evidence="1">Monomer.</text>
</comment>
<comment type="subcellular location">
    <subcellularLocation>
        <location evidence="1">Cytoplasm</location>
    </subcellularLocation>
</comment>
<comment type="similarity">
    <text evidence="1">Belongs to the RNase H family.</text>
</comment>
<sequence>MSELKQIRIYTDGSCLGNPGPGGYGVVMIYKQHRKELADGFALTTNNRMELLAPIVALESLKEPCDVILTSDSQYMRQGITEWIHGWKKKGWVTASKTPVKNVDLWQRLDAAAAKHKVDWRWVKGHAGHAENERCDTLAREAAEAKPTQIDKGYQP</sequence>
<dbReference type="EC" id="3.1.26.4" evidence="1"/>
<dbReference type="EMBL" id="CP000507">
    <property type="protein sequence ID" value="ABM00087.1"/>
    <property type="molecule type" value="Genomic_DNA"/>
</dbReference>
<dbReference type="RefSeq" id="WP_011759994.1">
    <property type="nucleotide sequence ID" value="NC_008700.1"/>
</dbReference>
<dbReference type="SMR" id="A1S6T0"/>
<dbReference type="STRING" id="326297.Sama_1881"/>
<dbReference type="KEGG" id="saz:Sama_1881"/>
<dbReference type="eggNOG" id="COG0328">
    <property type="taxonomic scope" value="Bacteria"/>
</dbReference>
<dbReference type="HOGENOM" id="CLU_030894_6_0_6"/>
<dbReference type="OrthoDB" id="7845843at2"/>
<dbReference type="Proteomes" id="UP000009175">
    <property type="component" value="Chromosome"/>
</dbReference>
<dbReference type="GO" id="GO:0005737">
    <property type="term" value="C:cytoplasm"/>
    <property type="evidence" value="ECO:0007669"/>
    <property type="project" value="UniProtKB-SubCell"/>
</dbReference>
<dbReference type="GO" id="GO:0000287">
    <property type="term" value="F:magnesium ion binding"/>
    <property type="evidence" value="ECO:0007669"/>
    <property type="project" value="UniProtKB-UniRule"/>
</dbReference>
<dbReference type="GO" id="GO:0003676">
    <property type="term" value="F:nucleic acid binding"/>
    <property type="evidence" value="ECO:0007669"/>
    <property type="project" value="InterPro"/>
</dbReference>
<dbReference type="GO" id="GO:0004523">
    <property type="term" value="F:RNA-DNA hybrid ribonuclease activity"/>
    <property type="evidence" value="ECO:0007669"/>
    <property type="project" value="UniProtKB-UniRule"/>
</dbReference>
<dbReference type="GO" id="GO:0043137">
    <property type="term" value="P:DNA replication, removal of RNA primer"/>
    <property type="evidence" value="ECO:0007669"/>
    <property type="project" value="TreeGrafter"/>
</dbReference>
<dbReference type="CDD" id="cd09278">
    <property type="entry name" value="RNase_HI_prokaryote_like"/>
    <property type="match status" value="1"/>
</dbReference>
<dbReference type="FunFam" id="3.30.420.10:FF:000008">
    <property type="entry name" value="Ribonuclease H"/>
    <property type="match status" value="1"/>
</dbReference>
<dbReference type="Gene3D" id="3.30.420.10">
    <property type="entry name" value="Ribonuclease H-like superfamily/Ribonuclease H"/>
    <property type="match status" value="1"/>
</dbReference>
<dbReference type="HAMAP" id="MF_00042">
    <property type="entry name" value="RNase_H"/>
    <property type="match status" value="1"/>
</dbReference>
<dbReference type="InterPro" id="IPR050092">
    <property type="entry name" value="RNase_H"/>
</dbReference>
<dbReference type="InterPro" id="IPR012337">
    <property type="entry name" value="RNaseH-like_sf"/>
</dbReference>
<dbReference type="InterPro" id="IPR002156">
    <property type="entry name" value="RNaseH_domain"/>
</dbReference>
<dbReference type="InterPro" id="IPR036397">
    <property type="entry name" value="RNaseH_sf"/>
</dbReference>
<dbReference type="InterPro" id="IPR022892">
    <property type="entry name" value="RNaseHI"/>
</dbReference>
<dbReference type="NCBIfam" id="NF001236">
    <property type="entry name" value="PRK00203.1"/>
    <property type="match status" value="1"/>
</dbReference>
<dbReference type="PANTHER" id="PTHR10642">
    <property type="entry name" value="RIBONUCLEASE H1"/>
    <property type="match status" value="1"/>
</dbReference>
<dbReference type="PANTHER" id="PTHR10642:SF26">
    <property type="entry name" value="RIBONUCLEASE H1"/>
    <property type="match status" value="1"/>
</dbReference>
<dbReference type="Pfam" id="PF00075">
    <property type="entry name" value="RNase_H"/>
    <property type="match status" value="1"/>
</dbReference>
<dbReference type="SUPFAM" id="SSF53098">
    <property type="entry name" value="Ribonuclease H-like"/>
    <property type="match status" value="1"/>
</dbReference>
<dbReference type="PROSITE" id="PS50879">
    <property type="entry name" value="RNASE_H_1"/>
    <property type="match status" value="1"/>
</dbReference>
<keyword id="KW-0963">Cytoplasm</keyword>
<keyword id="KW-0255">Endonuclease</keyword>
<keyword id="KW-0378">Hydrolase</keyword>
<keyword id="KW-0460">Magnesium</keyword>
<keyword id="KW-0479">Metal-binding</keyword>
<keyword id="KW-0540">Nuclease</keyword>
<keyword id="KW-1185">Reference proteome</keyword>
<reference key="1">
    <citation type="submission" date="2006-12" db="EMBL/GenBank/DDBJ databases">
        <title>Complete sequence of Shewanella amazonensis SB2B.</title>
        <authorList>
            <consortium name="US DOE Joint Genome Institute"/>
            <person name="Copeland A."/>
            <person name="Lucas S."/>
            <person name="Lapidus A."/>
            <person name="Barry K."/>
            <person name="Detter J.C."/>
            <person name="Glavina del Rio T."/>
            <person name="Hammon N."/>
            <person name="Israni S."/>
            <person name="Dalin E."/>
            <person name="Tice H."/>
            <person name="Pitluck S."/>
            <person name="Munk A.C."/>
            <person name="Brettin T."/>
            <person name="Bruce D."/>
            <person name="Han C."/>
            <person name="Tapia R."/>
            <person name="Gilna P."/>
            <person name="Schmutz J."/>
            <person name="Larimer F."/>
            <person name="Land M."/>
            <person name="Hauser L."/>
            <person name="Kyrpides N."/>
            <person name="Mikhailova N."/>
            <person name="Fredrickson J."/>
            <person name="Richardson P."/>
        </authorList>
    </citation>
    <scope>NUCLEOTIDE SEQUENCE [LARGE SCALE GENOMIC DNA]</scope>
    <source>
        <strain>ATCC BAA-1098 / SB2B</strain>
    </source>
</reference>
<name>RNH_SHEAM</name>
<proteinExistence type="inferred from homology"/>
<feature type="chain" id="PRO_1000074665" description="Ribonuclease H">
    <location>
        <begin position="1"/>
        <end position="156"/>
    </location>
</feature>
<feature type="domain" description="RNase H type-1" evidence="2">
    <location>
        <begin position="3"/>
        <end position="144"/>
    </location>
</feature>
<feature type="binding site" evidence="1">
    <location>
        <position position="12"/>
    </location>
    <ligand>
        <name>Mg(2+)</name>
        <dbReference type="ChEBI" id="CHEBI:18420"/>
        <label>1</label>
    </ligand>
</feature>
<feature type="binding site" evidence="1">
    <location>
        <position position="12"/>
    </location>
    <ligand>
        <name>Mg(2+)</name>
        <dbReference type="ChEBI" id="CHEBI:18420"/>
        <label>2</label>
    </ligand>
</feature>
<feature type="binding site" evidence="1">
    <location>
        <position position="50"/>
    </location>
    <ligand>
        <name>Mg(2+)</name>
        <dbReference type="ChEBI" id="CHEBI:18420"/>
        <label>1</label>
    </ligand>
</feature>
<feature type="binding site" evidence="1">
    <location>
        <position position="72"/>
    </location>
    <ligand>
        <name>Mg(2+)</name>
        <dbReference type="ChEBI" id="CHEBI:18420"/>
        <label>1</label>
    </ligand>
</feature>
<feature type="binding site" evidence="1">
    <location>
        <position position="136"/>
    </location>
    <ligand>
        <name>Mg(2+)</name>
        <dbReference type="ChEBI" id="CHEBI:18420"/>
        <label>2</label>
    </ligand>
</feature>
<accession>A1S6T0</accession>
<evidence type="ECO:0000255" key="1">
    <source>
        <dbReference type="HAMAP-Rule" id="MF_00042"/>
    </source>
</evidence>
<evidence type="ECO:0000255" key="2">
    <source>
        <dbReference type="PROSITE-ProRule" id="PRU00408"/>
    </source>
</evidence>
<protein>
    <recommendedName>
        <fullName evidence="1">Ribonuclease H</fullName>
        <shortName evidence="1">RNase H</shortName>
        <ecNumber evidence="1">3.1.26.4</ecNumber>
    </recommendedName>
</protein>